<organism>
    <name type="scientific">Arabidopsis thaliana</name>
    <name type="common">Mouse-ear cress</name>
    <dbReference type="NCBI Taxonomy" id="3702"/>
    <lineage>
        <taxon>Eukaryota</taxon>
        <taxon>Viridiplantae</taxon>
        <taxon>Streptophyta</taxon>
        <taxon>Embryophyta</taxon>
        <taxon>Tracheophyta</taxon>
        <taxon>Spermatophyta</taxon>
        <taxon>Magnoliopsida</taxon>
        <taxon>eudicotyledons</taxon>
        <taxon>Gunneridae</taxon>
        <taxon>Pentapetalae</taxon>
        <taxon>rosids</taxon>
        <taxon>malvids</taxon>
        <taxon>Brassicales</taxon>
        <taxon>Brassicaceae</taxon>
        <taxon>Camelineae</taxon>
        <taxon>Arabidopsis</taxon>
    </lineage>
</organism>
<name>COBL1_ARATH</name>
<keyword id="KW-1003">Cell membrane</keyword>
<keyword id="KW-0325">Glycoprotein</keyword>
<keyword id="KW-0336">GPI-anchor</keyword>
<keyword id="KW-0449">Lipoprotein</keyword>
<keyword id="KW-0472">Membrane</keyword>
<keyword id="KW-1185">Reference proteome</keyword>
<keyword id="KW-0732">Signal</keyword>
<comment type="subcellular location">
    <subcellularLocation>
        <location evidence="3">Cell membrane</location>
        <topology evidence="3">Lipid-anchor</topology>
        <topology evidence="3">GPI-anchor</topology>
    </subcellularLocation>
</comment>
<comment type="tissue specificity">
    <text evidence="2">Expressed in roots, stems, leaves, flowers and siliques.</text>
</comment>
<comment type="similarity">
    <text evidence="3">Belongs to the COBRA family.</text>
</comment>
<proteinExistence type="evidence at transcript level"/>
<gene>
    <name type="primary">COBL1</name>
    <name type="ordered locus">At3g02210</name>
    <name type="ORF">F14P3.14</name>
</gene>
<protein>
    <recommendedName>
        <fullName>COBRA-like protein 1</fullName>
    </recommendedName>
</protein>
<dbReference type="EMBL" id="AC009755">
    <property type="protein sequence ID" value="AAF02128.1"/>
    <property type="molecule type" value="Genomic_DNA"/>
</dbReference>
<dbReference type="EMBL" id="CP002686">
    <property type="protein sequence ID" value="AEE73779.1"/>
    <property type="molecule type" value="Genomic_DNA"/>
</dbReference>
<dbReference type="EMBL" id="AK118555">
    <property type="protein sequence ID" value="BAC43156.1"/>
    <property type="molecule type" value="mRNA"/>
</dbReference>
<dbReference type="EMBL" id="BT005373">
    <property type="protein sequence ID" value="AAO63437.1"/>
    <property type="molecule type" value="mRNA"/>
</dbReference>
<dbReference type="RefSeq" id="NP_186870.1">
    <property type="nucleotide sequence ID" value="NM_111088.4"/>
</dbReference>
<dbReference type="STRING" id="3702.Q9SRT7"/>
<dbReference type="GlyCosmos" id="Q9SRT7">
    <property type="glycosylation" value="9 sites, No reported glycans"/>
</dbReference>
<dbReference type="GlyGen" id="Q9SRT7">
    <property type="glycosylation" value="9 sites"/>
</dbReference>
<dbReference type="PaxDb" id="3702-AT3G02210.1"/>
<dbReference type="ProteomicsDB" id="241006"/>
<dbReference type="EnsemblPlants" id="AT3G02210.1">
    <property type="protein sequence ID" value="AT3G02210.1"/>
    <property type="gene ID" value="AT3G02210"/>
</dbReference>
<dbReference type="GeneID" id="821245"/>
<dbReference type="Gramene" id="AT3G02210.1">
    <property type="protein sequence ID" value="AT3G02210.1"/>
    <property type="gene ID" value="AT3G02210"/>
</dbReference>
<dbReference type="KEGG" id="ath:AT3G02210"/>
<dbReference type="Araport" id="AT3G02210"/>
<dbReference type="TAIR" id="AT3G02210">
    <property type="gene designation" value="COBL1"/>
</dbReference>
<dbReference type="eggNOG" id="ENOG502QTGW">
    <property type="taxonomic scope" value="Eukaryota"/>
</dbReference>
<dbReference type="HOGENOM" id="CLU_038120_0_0_1"/>
<dbReference type="InParanoid" id="Q9SRT7"/>
<dbReference type="OMA" id="CGCQSNG"/>
<dbReference type="OrthoDB" id="2012261at2759"/>
<dbReference type="PhylomeDB" id="Q9SRT7"/>
<dbReference type="PRO" id="PR:Q9SRT7"/>
<dbReference type="Proteomes" id="UP000006548">
    <property type="component" value="Chromosome 3"/>
</dbReference>
<dbReference type="ExpressionAtlas" id="Q9SRT7">
    <property type="expression patterns" value="baseline and differential"/>
</dbReference>
<dbReference type="GO" id="GO:0005886">
    <property type="term" value="C:plasma membrane"/>
    <property type="evidence" value="ECO:0007669"/>
    <property type="project" value="UniProtKB-SubCell"/>
</dbReference>
<dbReference type="GO" id="GO:0098552">
    <property type="term" value="C:side of membrane"/>
    <property type="evidence" value="ECO:0007669"/>
    <property type="project" value="UniProtKB-KW"/>
</dbReference>
<dbReference type="GO" id="GO:0010215">
    <property type="term" value="P:cellulose microfibril organization"/>
    <property type="evidence" value="ECO:0007669"/>
    <property type="project" value="InterPro"/>
</dbReference>
<dbReference type="InterPro" id="IPR056900">
    <property type="entry name" value="COB_C"/>
</dbReference>
<dbReference type="InterPro" id="IPR006918">
    <property type="entry name" value="COBRA_pln"/>
</dbReference>
<dbReference type="PANTHER" id="PTHR31673:SF45">
    <property type="entry name" value="COBRA-LIKE PROTEIN 1"/>
    <property type="match status" value="1"/>
</dbReference>
<dbReference type="PANTHER" id="PTHR31673">
    <property type="entry name" value="PROTEIN COBRA"/>
    <property type="match status" value="1"/>
</dbReference>
<dbReference type="Pfam" id="PF25079">
    <property type="entry name" value="COB_C"/>
    <property type="match status" value="1"/>
</dbReference>
<dbReference type="Pfam" id="PF04833">
    <property type="entry name" value="COBRA"/>
    <property type="match status" value="1"/>
</dbReference>
<dbReference type="PIRSF" id="PIRSF038122">
    <property type="entry name" value="COBRA"/>
    <property type="match status" value="1"/>
</dbReference>
<reference key="1">
    <citation type="journal article" date="2000" name="Nature">
        <title>Sequence and analysis of chromosome 3 of the plant Arabidopsis thaliana.</title>
        <authorList>
            <person name="Salanoubat M."/>
            <person name="Lemcke K."/>
            <person name="Rieger M."/>
            <person name="Ansorge W."/>
            <person name="Unseld M."/>
            <person name="Fartmann B."/>
            <person name="Valle G."/>
            <person name="Bloecker H."/>
            <person name="Perez-Alonso M."/>
            <person name="Obermaier B."/>
            <person name="Delseny M."/>
            <person name="Boutry M."/>
            <person name="Grivell L.A."/>
            <person name="Mache R."/>
            <person name="Puigdomenech P."/>
            <person name="De Simone V."/>
            <person name="Choisne N."/>
            <person name="Artiguenave F."/>
            <person name="Robert C."/>
            <person name="Brottier P."/>
            <person name="Wincker P."/>
            <person name="Cattolico L."/>
            <person name="Weissenbach J."/>
            <person name="Saurin W."/>
            <person name="Quetier F."/>
            <person name="Schaefer M."/>
            <person name="Mueller-Auer S."/>
            <person name="Gabel C."/>
            <person name="Fuchs M."/>
            <person name="Benes V."/>
            <person name="Wurmbach E."/>
            <person name="Drzonek H."/>
            <person name="Erfle H."/>
            <person name="Jordan N."/>
            <person name="Bangert S."/>
            <person name="Wiedelmann R."/>
            <person name="Kranz H."/>
            <person name="Voss H."/>
            <person name="Holland R."/>
            <person name="Brandt P."/>
            <person name="Nyakatura G."/>
            <person name="Vezzi A."/>
            <person name="D'Angelo M."/>
            <person name="Pallavicini A."/>
            <person name="Toppo S."/>
            <person name="Simionati B."/>
            <person name="Conrad A."/>
            <person name="Hornischer K."/>
            <person name="Kauer G."/>
            <person name="Loehnert T.-H."/>
            <person name="Nordsiek G."/>
            <person name="Reichelt J."/>
            <person name="Scharfe M."/>
            <person name="Schoen O."/>
            <person name="Bargues M."/>
            <person name="Terol J."/>
            <person name="Climent J."/>
            <person name="Navarro P."/>
            <person name="Collado C."/>
            <person name="Perez-Perez A."/>
            <person name="Ottenwaelder B."/>
            <person name="Duchemin D."/>
            <person name="Cooke R."/>
            <person name="Laudie M."/>
            <person name="Berger-Llauro C."/>
            <person name="Purnelle B."/>
            <person name="Masuy D."/>
            <person name="de Haan M."/>
            <person name="Maarse A.C."/>
            <person name="Alcaraz J.-P."/>
            <person name="Cottet A."/>
            <person name="Casacuberta E."/>
            <person name="Monfort A."/>
            <person name="Argiriou A."/>
            <person name="Flores M."/>
            <person name="Liguori R."/>
            <person name="Vitale D."/>
            <person name="Mannhaupt G."/>
            <person name="Haase D."/>
            <person name="Schoof H."/>
            <person name="Rudd S."/>
            <person name="Zaccaria P."/>
            <person name="Mewes H.-W."/>
            <person name="Mayer K.F.X."/>
            <person name="Kaul S."/>
            <person name="Town C.D."/>
            <person name="Koo H.L."/>
            <person name="Tallon L.J."/>
            <person name="Jenkins J."/>
            <person name="Rooney T."/>
            <person name="Rizzo M."/>
            <person name="Walts A."/>
            <person name="Utterback T."/>
            <person name="Fujii C.Y."/>
            <person name="Shea T.P."/>
            <person name="Creasy T.H."/>
            <person name="Haas B."/>
            <person name="Maiti R."/>
            <person name="Wu D."/>
            <person name="Peterson J."/>
            <person name="Van Aken S."/>
            <person name="Pai G."/>
            <person name="Militscher J."/>
            <person name="Sellers P."/>
            <person name="Gill J.E."/>
            <person name="Feldblyum T.V."/>
            <person name="Preuss D."/>
            <person name="Lin X."/>
            <person name="Nierman W.C."/>
            <person name="Salzberg S.L."/>
            <person name="White O."/>
            <person name="Venter J.C."/>
            <person name="Fraser C.M."/>
            <person name="Kaneko T."/>
            <person name="Nakamura Y."/>
            <person name="Sato S."/>
            <person name="Kato T."/>
            <person name="Asamizu E."/>
            <person name="Sasamoto S."/>
            <person name="Kimura T."/>
            <person name="Idesawa K."/>
            <person name="Kawashima K."/>
            <person name="Kishida Y."/>
            <person name="Kiyokawa C."/>
            <person name="Kohara M."/>
            <person name="Matsumoto M."/>
            <person name="Matsuno A."/>
            <person name="Muraki A."/>
            <person name="Nakayama S."/>
            <person name="Nakazaki N."/>
            <person name="Shinpo S."/>
            <person name="Takeuchi C."/>
            <person name="Wada T."/>
            <person name="Watanabe A."/>
            <person name="Yamada M."/>
            <person name="Yasuda M."/>
            <person name="Tabata S."/>
        </authorList>
    </citation>
    <scope>NUCLEOTIDE SEQUENCE [LARGE SCALE GENOMIC DNA]</scope>
    <source>
        <strain>cv. Columbia</strain>
    </source>
</reference>
<reference key="2">
    <citation type="journal article" date="2017" name="Plant J.">
        <title>Araport11: a complete reannotation of the Arabidopsis thaliana reference genome.</title>
        <authorList>
            <person name="Cheng C.Y."/>
            <person name="Krishnakumar V."/>
            <person name="Chan A.P."/>
            <person name="Thibaud-Nissen F."/>
            <person name="Schobel S."/>
            <person name="Town C.D."/>
        </authorList>
    </citation>
    <scope>GENOME REANNOTATION</scope>
    <source>
        <strain>cv. Columbia</strain>
    </source>
</reference>
<reference key="3">
    <citation type="journal article" date="2002" name="Science">
        <title>Functional annotation of a full-length Arabidopsis cDNA collection.</title>
        <authorList>
            <person name="Seki M."/>
            <person name="Narusaka M."/>
            <person name="Kamiya A."/>
            <person name="Ishida J."/>
            <person name="Satou M."/>
            <person name="Sakurai T."/>
            <person name="Nakajima M."/>
            <person name="Enju A."/>
            <person name="Akiyama K."/>
            <person name="Oono Y."/>
            <person name="Muramatsu M."/>
            <person name="Hayashizaki Y."/>
            <person name="Kawai J."/>
            <person name="Carninci P."/>
            <person name="Itoh M."/>
            <person name="Ishii Y."/>
            <person name="Arakawa T."/>
            <person name="Shibata K."/>
            <person name="Shinagawa A."/>
            <person name="Shinozaki K."/>
        </authorList>
    </citation>
    <scope>NUCLEOTIDE SEQUENCE [LARGE SCALE MRNA]</scope>
    <source>
        <strain>cv. Columbia</strain>
    </source>
</reference>
<reference key="4">
    <citation type="journal article" date="2003" name="Science">
        <title>Empirical analysis of transcriptional activity in the Arabidopsis genome.</title>
        <authorList>
            <person name="Yamada K."/>
            <person name="Lim J."/>
            <person name="Dale J.M."/>
            <person name="Chen H."/>
            <person name="Shinn P."/>
            <person name="Palm C.J."/>
            <person name="Southwick A.M."/>
            <person name="Wu H.C."/>
            <person name="Kim C.J."/>
            <person name="Nguyen M."/>
            <person name="Pham P.K."/>
            <person name="Cheuk R.F."/>
            <person name="Karlin-Newmann G."/>
            <person name="Liu S.X."/>
            <person name="Lam B."/>
            <person name="Sakano H."/>
            <person name="Wu T."/>
            <person name="Yu G."/>
            <person name="Miranda M."/>
            <person name="Quach H.L."/>
            <person name="Tripp M."/>
            <person name="Chang C.H."/>
            <person name="Lee J.M."/>
            <person name="Toriumi M.J."/>
            <person name="Chan M.M."/>
            <person name="Tang C.C."/>
            <person name="Onodera C.S."/>
            <person name="Deng J.M."/>
            <person name="Akiyama K."/>
            <person name="Ansari Y."/>
            <person name="Arakawa T."/>
            <person name="Banh J."/>
            <person name="Banno F."/>
            <person name="Bowser L."/>
            <person name="Brooks S.Y."/>
            <person name="Carninci P."/>
            <person name="Chao Q."/>
            <person name="Choy N."/>
            <person name="Enju A."/>
            <person name="Goldsmith A.D."/>
            <person name="Gurjal M."/>
            <person name="Hansen N.F."/>
            <person name="Hayashizaki Y."/>
            <person name="Johnson-Hopson C."/>
            <person name="Hsuan V.W."/>
            <person name="Iida K."/>
            <person name="Karnes M."/>
            <person name="Khan S."/>
            <person name="Koesema E."/>
            <person name="Ishida J."/>
            <person name="Jiang P.X."/>
            <person name="Jones T."/>
            <person name="Kawai J."/>
            <person name="Kamiya A."/>
            <person name="Meyers C."/>
            <person name="Nakajima M."/>
            <person name="Narusaka M."/>
            <person name="Seki M."/>
            <person name="Sakurai T."/>
            <person name="Satou M."/>
            <person name="Tamse R."/>
            <person name="Vaysberg M."/>
            <person name="Wallender E.K."/>
            <person name="Wong C."/>
            <person name="Yamamura Y."/>
            <person name="Yuan S."/>
            <person name="Shinozaki K."/>
            <person name="Davis R.W."/>
            <person name="Theologis A."/>
            <person name="Ecker J.R."/>
        </authorList>
    </citation>
    <scope>NUCLEOTIDE SEQUENCE [LARGE SCALE MRNA]</scope>
    <source>
        <strain>cv. Columbia</strain>
    </source>
</reference>
<reference key="5">
    <citation type="journal article" date="2002" name="Plant Physiol.">
        <title>The COBRA family of putative GPI-anchored proteins in Arabidopsis. A new fellowship in expansion.</title>
        <authorList>
            <person name="Roudier F."/>
            <person name="Schindelman G."/>
            <person name="DeSalle R."/>
            <person name="Benfey P.N."/>
        </authorList>
    </citation>
    <scope>TISSUE SPECIFICITY</scope>
</reference>
<feature type="signal peptide" evidence="1">
    <location>
        <begin position="1"/>
        <end position="33"/>
    </location>
</feature>
<feature type="chain" id="PRO_0000005572" description="COBRA-like protein 1">
    <location>
        <begin position="34"/>
        <end position="432"/>
    </location>
</feature>
<feature type="propeptide" id="PRO_0000005573" description="Removed in mature form" evidence="1">
    <location>
        <begin position="433"/>
        <end position="452"/>
    </location>
</feature>
<feature type="lipid moiety-binding region" description="GPI-anchor amidated serine" evidence="1">
    <location>
        <position position="432"/>
    </location>
</feature>
<feature type="glycosylation site" description="N-linked (GlcNAc...) asparagine" evidence="1">
    <location>
        <position position="42"/>
    </location>
</feature>
<feature type="glycosylation site" description="N-linked (GlcNAc...) asparagine" evidence="1">
    <location>
        <position position="167"/>
    </location>
</feature>
<feature type="glycosylation site" description="N-linked (GlcNAc...) asparagine" evidence="1">
    <location>
        <position position="175"/>
    </location>
</feature>
<feature type="glycosylation site" description="N-linked (GlcNAc...) asparagine" evidence="1">
    <location>
        <position position="214"/>
    </location>
</feature>
<feature type="glycosylation site" description="N-linked (GlcNAc...) asparagine" evidence="1">
    <location>
        <position position="239"/>
    </location>
</feature>
<feature type="glycosylation site" description="N-linked (GlcNAc...) asparagine" evidence="1">
    <location>
        <position position="254"/>
    </location>
</feature>
<feature type="glycosylation site" description="N-linked (GlcNAc...) asparagine" evidence="1">
    <location>
        <position position="323"/>
    </location>
</feature>
<feature type="glycosylation site" description="N-linked (GlcNAc...) asparagine" evidence="1">
    <location>
        <position position="338"/>
    </location>
</feature>
<feature type="glycosylation site" description="N-linked (GlcNAc...) asparagine" evidence="1">
    <location>
        <position position="357"/>
    </location>
</feature>
<evidence type="ECO:0000255" key="1"/>
<evidence type="ECO:0000269" key="2">
    <source>
    </source>
</evidence>
<evidence type="ECO:0000305" key="3"/>
<sequence>MGFFLCSSSSIFFKFGISIIFLVSFSGLTPSEAYDPLDPSGNITVKWDIITWTGDGYVATVTVYNFQQYRHIQAPGWTLGWSWAKREVIWGMNGGQTTEQGDCSKFKGTIPHCCKKTPSVVDLLPGSPYNQQIANCCRGGVLNSWAQDPATAVSAFQLTVGQAGTTNKTVRVPKNFTLKAPGPGYTCSPAKIVKPTRFIGTDKRRVTQALMTWNVTCTYSQFLAQKTPTCCVSLSSFYNKTIVSCPTCSCGCRNTSQPGNCVDPKGPRIASVIPNPGKNAYIPPLVQCTKHMCPVRIHWHVKVNYKQYWRVKVTITNFNYNMNYSQWNLVVQHPNFDNLTQTFSFNYKPLTPYASINDTGILWGIKFYNDLLMQAGPFGNVQSELLFQKEASAFTFEKGWAFPRRIYFNGDNCVMPPPDSYPWLPNTGSHKSVGSLFAAMALLLIVFLHGNL</sequence>
<accession>Q9SRT7</accession>